<accession>Q54IR1</accession>
<gene>
    <name type="ORF">DDB_G0288577</name>
</gene>
<organism>
    <name type="scientific">Dictyostelium discoideum</name>
    <name type="common">Social amoeba</name>
    <dbReference type="NCBI Taxonomy" id="44689"/>
    <lineage>
        <taxon>Eukaryota</taxon>
        <taxon>Amoebozoa</taxon>
        <taxon>Evosea</taxon>
        <taxon>Eumycetozoa</taxon>
        <taxon>Dictyostelia</taxon>
        <taxon>Dictyosteliales</taxon>
        <taxon>Dictyosteliaceae</taxon>
        <taxon>Dictyostelium</taxon>
    </lineage>
</organism>
<dbReference type="EMBL" id="AAFI02000117">
    <property type="protein sequence ID" value="EAL63148.1"/>
    <property type="molecule type" value="Genomic_DNA"/>
</dbReference>
<dbReference type="RefSeq" id="XP_636653.1">
    <property type="nucleotide sequence ID" value="XM_631561.1"/>
</dbReference>
<dbReference type="SMR" id="Q54IR1"/>
<dbReference type="PaxDb" id="44689-DDB0188002"/>
<dbReference type="EnsemblProtists" id="EAL63148">
    <property type="protein sequence ID" value="EAL63148"/>
    <property type="gene ID" value="DDB_G0288577"/>
</dbReference>
<dbReference type="GeneID" id="8626699"/>
<dbReference type="KEGG" id="ddi:DDB_G0288577"/>
<dbReference type="dictyBase" id="DDB_G0288577"/>
<dbReference type="VEuPathDB" id="AmoebaDB:DDB_G0288577"/>
<dbReference type="HOGENOM" id="CLU_3091303_0_0_1"/>
<dbReference type="InParanoid" id="Q54IR1"/>
<dbReference type="PRO" id="PR:Q54IR1"/>
<dbReference type="Proteomes" id="UP000002195">
    <property type="component" value="Chromosome 5"/>
</dbReference>
<protein>
    <recommendedName>
        <fullName>Putative uncharacterized protein DDB_G0288577</fullName>
    </recommendedName>
</protein>
<evidence type="ECO:0000256" key="1">
    <source>
        <dbReference type="SAM" id="MobiDB-lite"/>
    </source>
</evidence>
<sequence>MVNNDAKIGRREFYDRVESVRPKSPPRERPTYTYSNSRTVDGYSNRGPRADF</sequence>
<reference key="1">
    <citation type="journal article" date="2005" name="Nature">
        <title>The genome of the social amoeba Dictyostelium discoideum.</title>
        <authorList>
            <person name="Eichinger L."/>
            <person name="Pachebat J.A."/>
            <person name="Gloeckner G."/>
            <person name="Rajandream M.A."/>
            <person name="Sucgang R."/>
            <person name="Berriman M."/>
            <person name="Song J."/>
            <person name="Olsen R."/>
            <person name="Szafranski K."/>
            <person name="Xu Q."/>
            <person name="Tunggal B."/>
            <person name="Kummerfeld S."/>
            <person name="Madera M."/>
            <person name="Konfortov B.A."/>
            <person name="Rivero F."/>
            <person name="Bankier A.T."/>
            <person name="Lehmann R."/>
            <person name="Hamlin N."/>
            <person name="Davies R."/>
            <person name="Gaudet P."/>
            <person name="Fey P."/>
            <person name="Pilcher K."/>
            <person name="Chen G."/>
            <person name="Saunders D."/>
            <person name="Sodergren E.J."/>
            <person name="Davis P."/>
            <person name="Kerhornou A."/>
            <person name="Nie X."/>
            <person name="Hall N."/>
            <person name="Anjard C."/>
            <person name="Hemphill L."/>
            <person name="Bason N."/>
            <person name="Farbrother P."/>
            <person name="Desany B."/>
            <person name="Just E."/>
            <person name="Morio T."/>
            <person name="Rost R."/>
            <person name="Churcher C.M."/>
            <person name="Cooper J."/>
            <person name="Haydock S."/>
            <person name="van Driessche N."/>
            <person name="Cronin A."/>
            <person name="Goodhead I."/>
            <person name="Muzny D.M."/>
            <person name="Mourier T."/>
            <person name="Pain A."/>
            <person name="Lu M."/>
            <person name="Harper D."/>
            <person name="Lindsay R."/>
            <person name="Hauser H."/>
            <person name="James K.D."/>
            <person name="Quiles M."/>
            <person name="Madan Babu M."/>
            <person name="Saito T."/>
            <person name="Buchrieser C."/>
            <person name="Wardroper A."/>
            <person name="Felder M."/>
            <person name="Thangavelu M."/>
            <person name="Johnson D."/>
            <person name="Knights A."/>
            <person name="Loulseged H."/>
            <person name="Mungall K.L."/>
            <person name="Oliver K."/>
            <person name="Price C."/>
            <person name="Quail M.A."/>
            <person name="Urushihara H."/>
            <person name="Hernandez J."/>
            <person name="Rabbinowitsch E."/>
            <person name="Steffen D."/>
            <person name="Sanders M."/>
            <person name="Ma J."/>
            <person name="Kohara Y."/>
            <person name="Sharp S."/>
            <person name="Simmonds M.N."/>
            <person name="Spiegler S."/>
            <person name="Tivey A."/>
            <person name="Sugano S."/>
            <person name="White B."/>
            <person name="Walker D."/>
            <person name="Woodward J.R."/>
            <person name="Winckler T."/>
            <person name="Tanaka Y."/>
            <person name="Shaulsky G."/>
            <person name="Schleicher M."/>
            <person name="Weinstock G.M."/>
            <person name="Rosenthal A."/>
            <person name="Cox E.C."/>
            <person name="Chisholm R.L."/>
            <person name="Gibbs R.A."/>
            <person name="Loomis W.F."/>
            <person name="Platzer M."/>
            <person name="Kay R.R."/>
            <person name="Williams J.G."/>
            <person name="Dear P.H."/>
            <person name="Noegel A.A."/>
            <person name="Barrell B.G."/>
            <person name="Kuspa A."/>
        </authorList>
    </citation>
    <scope>NUCLEOTIDE SEQUENCE [LARGE SCALE GENOMIC DNA]</scope>
    <source>
        <strain>AX4</strain>
    </source>
</reference>
<proteinExistence type="predicted"/>
<keyword id="KW-1185">Reference proteome</keyword>
<name>Y8002_DICDI</name>
<feature type="chain" id="PRO_0000346981" description="Putative uncharacterized protein DDB_G0288577">
    <location>
        <begin position="1"/>
        <end position="52"/>
    </location>
</feature>
<feature type="region of interest" description="Disordered" evidence="1">
    <location>
        <begin position="1"/>
        <end position="52"/>
    </location>
</feature>
<feature type="compositionally biased region" description="Basic and acidic residues" evidence="1">
    <location>
        <begin position="7"/>
        <end position="30"/>
    </location>
</feature>